<proteinExistence type="inferred from homology"/>
<name>KDPC_RHOPB</name>
<reference key="1">
    <citation type="submission" date="2006-03" db="EMBL/GenBank/DDBJ databases">
        <title>Complete sequence of Rhodopseudomonas palustris BisB18.</title>
        <authorList>
            <consortium name="US DOE Joint Genome Institute"/>
            <person name="Copeland A."/>
            <person name="Lucas S."/>
            <person name="Lapidus A."/>
            <person name="Barry K."/>
            <person name="Detter J.C."/>
            <person name="Glavina del Rio T."/>
            <person name="Hammon N."/>
            <person name="Israni S."/>
            <person name="Dalin E."/>
            <person name="Tice H."/>
            <person name="Pitluck S."/>
            <person name="Chain P."/>
            <person name="Malfatti S."/>
            <person name="Shin M."/>
            <person name="Vergez L."/>
            <person name="Schmutz J."/>
            <person name="Larimer F."/>
            <person name="Land M."/>
            <person name="Hauser L."/>
            <person name="Pelletier D.A."/>
            <person name="Kyrpides N."/>
            <person name="Anderson I."/>
            <person name="Oda Y."/>
            <person name="Harwood C.S."/>
            <person name="Richardson P."/>
        </authorList>
    </citation>
    <scope>NUCLEOTIDE SEQUENCE [LARGE SCALE GENOMIC DNA]</scope>
    <source>
        <strain>BisB18</strain>
    </source>
</reference>
<organism>
    <name type="scientific">Rhodopseudomonas palustris (strain BisB18)</name>
    <dbReference type="NCBI Taxonomy" id="316056"/>
    <lineage>
        <taxon>Bacteria</taxon>
        <taxon>Pseudomonadati</taxon>
        <taxon>Pseudomonadota</taxon>
        <taxon>Alphaproteobacteria</taxon>
        <taxon>Hyphomicrobiales</taxon>
        <taxon>Nitrobacteraceae</taxon>
        <taxon>Rhodopseudomonas</taxon>
    </lineage>
</organism>
<comment type="function">
    <text evidence="1">Part of the high-affinity ATP-driven potassium transport (or Kdp) system, which catalyzes the hydrolysis of ATP coupled with the electrogenic transport of potassium into the cytoplasm. This subunit acts as a catalytic chaperone that increases the ATP-binding affinity of the ATP-hydrolyzing subunit KdpB by the formation of a transient KdpB/KdpC/ATP ternary complex.</text>
</comment>
<comment type="subunit">
    <text evidence="1">The system is composed of three essential subunits: KdpA, KdpB and KdpC.</text>
</comment>
<comment type="subcellular location">
    <subcellularLocation>
        <location evidence="1">Cell inner membrane</location>
        <topology evidence="1">Single-pass membrane protein</topology>
    </subcellularLocation>
</comment>
<comment type="similarity">
    <text evidence="1">Belongs to the KdpC family.</text>
</comment>
<protein>
    <recommendedName>
        <fullName evidence="1">Potassium-transporting ATPase KdpC subunit</fullName>
    </recommendedName>
    <alternativeName>
        <fullName evidence="1">ATP phosphohydrolase [potassium-transporting] C chain</fullName>
    </alternativeName>
    <alternativeName>
        <fullName evidence="1">Potassium-binding and translocating subunit C</fullName>
    </alternativeName>
    <alternativeName>
        <fullName evidence="1">Potassium-translocating ATPase C chain</fullName>
    </alternativeName>
</protein>
<sequence>MLKEIRPAIVLLLALTLLTGLAYPLAMTALAGVIFPKQAQGSLIEQDGQVIGSALIGQPFTEDKYFHGRPSATTAADPQDSSKTVPAPYNAANSAGSNLGPTNKALIDRVKDDVDKLKAENPSAAVPVDLVTTSASGLDPDISPEAALFQVPRVAKARGLSEERLRQLVSDHSKARLAGLLGEPRVNVLALNLALDAAK</sequence>
<gene>
    <name evidence="1" type="primary">kdpC</name>
    <name type="ordered locus">RPC_4548</name>
</gene>
<feature type="chain" id="PRO_1000022307" description="Potassium-transporting ATPase KdpC subunit">
    <location>
        <begin position="1"/>
        <end position="199"/>
    </location>
</feature>
<feature type="transmembrane region" description="Helical" evidence="1">
    <location>
        <begin position="7"/>
        <end position="27"/>
    </location>
</feature>
<feature type="region of interest" description="Disordered" evidence="2">
    <location>
        <begin position="67"/>
        <end position="86"/>
    </location>
</feature>
<feature type="compositionally biased region" description="Polar residues" evidence="2">
    <location>
        <begin position="71"/>
        <end position="84"/>
    </location>
</feature>
<evidence type="ECO:0000255" key="1">
    <source>
        <dbReference type="HAMAP-Rule" id="MF_00276"/>
    </source>
</evidence>
<evidence type="ECO:0000256" key="2">
    <source>
        <dbReference type="SAM" id="MobiDB-lite"/>
    </source>
</evidence>
<keyword id="KW-0067">ATP-binding</keyword>
<keyword id="KW-0997">Cell inner membrane</keyword>
<keyword id="KW-1003">Cell membrane</keyword>
<keyword id="KW-0406">Ion transport</keyword>
<keyword id="KW-0472">Membrane</keyword>
<keyword id="KW-0547">Nucleotide-binding</keyword>
<keyword id="KW-0630">Potassium</keyword>
<keyword id="KW-0633">Potassium transport</keyword>
<keyword id="KW-0812">Transmembrane</keyword>
<keyword id="KW-1133">Transmembrane helix</keyword>
<keyword id="KW-0813">Transport</keyword>
<accession>Q20XR6</accession>
<dbReference type="EMBL" id="CP000301">
    <property type="protein sequence ID" value="ABD90070.1"/>
    <property type="molecule type" value="Genomic_DNA"/>
</dbReference>
<dbReference type="SMR" id="Q20XR6"/>
<dbReference type="STRING" id="316056.RPC_4548"/>
<dbReference type="KEGG" id="rpc:RPC_4548"/>
<dbReference type="eggNOG" id="COG2156">
    <property type="taxonomic scope" value="Bacteria"/>
</dbReference>
<dbReference type="HOGENOM" id="CLU_077094_2_0_5"/>
<dbReference type="OrthoDB" id="9788285at2"/>
<dbReference type="GO" id="GO:0005886">
    <property type="term" value="C:plasma membrane"/>
    <property type="evidence" value="ECO:0007669"/>
    <property type="project" value="UniProtKB-SubCell"/>
</dbReference>
<dbReference type="GO" id="GO:0005524">
    <property type="term" value="F:ATP binding"/>
    <property type="evidence" value="ECO:0007669"/>
    <property type="project" value="UniProtKB-UniRule"/>
</dbReference>
<dbReference type="GO" id="GO:0008556">
    <property type="term" value="F:P-type potassium transmembrane transporter activity"/>
    <property type="evidence" value="ECO:0007669"/>
    <property type="project" value="InterPro"/>
</dbReference>
<dbReference type="HAMAP" id="MF_00276">
    <property type="entry name" value="KdpC"/>
    <property type="match status" value="1"/>
</dbReference>
<dbReference type="InterPro" id="IPR003820">
    <property type="entry name" value="KdpC"/>
</dbReference>
<dbReference type="NCBIfam" id="TIGR00681">
    <property type="entry name" value="kdpC"/>
    <property type="match status" value="1"/>
</dbReference>
<dbReference type="NCBIfam" id="NF001454">
    <property type="entry name" value="PRK00315.1"/>
    <property type="match status" value="1"/>
</dbReference>
<dbReference type="NCBIfam" id="NF010603">
    <property type="entry name" value="PRK13999.1"/>
    <property type="match status" value="1"/>
</dbReference>
<dbReference type="PANTHER" id="PTHR30042">
    <property type="entry name" value="POTASSIUM-TRANSPORTING ATPASE C CHAIN"/>
    <property type="match status" value="1"/>
</dbReference>
<dbReference type="PANTHER" id="PTHR30042:SF2">
    <property type="entry name" value="POTASSIUM-TRANSPORTING ATPASE KDPC SUBUNIT"/>
    <property type="match status" value="1"/>
</dbReference>
<dbReference type="Pfam" id="PF02669">
    <property type="entry name" value="KdpC"/>
    <property type="match status" value="1"/>
</dbReference>
<dbReference type="PIRSF" id="PIRSF001296">
    <property type="entry name" value="K_ATPase_KdpC"/>
    <property type="match status" value="1"/>
</dbReference>